<feature type="chain" id="PRO_0000396618" description="Lon protease">
    <location>
        <begin position="1"/>
        <end position="802"/>
    </location>
</feature>
<feature type="domain" description="Lon N-terminal" evidence="3">
    <location>
        <begin position="17"/>
        <end position="211"/>
    </location>
</feature>
<feature type="domain" description="Lon proteolytic" evidence="2">
    <location>
        <begin position="600"/>
        <end position="780"/>
    </location>
</feature>
<feature type="active site" evidence="1">
    <location>
        <position position="686"/>
    </location>
</feature>
<feature type="active site" evidence="1">
    <location>
        <position position="729"/>
    </location>
</feature>
<feature type="binding site" evidence="1">
    <location>
        <begin position="363"/>
        <end position="370"/>
    </location>
    <ligand>
        <name>ATP</name>
        <dbReference type="ChEBI" id="CHEBI:30616"/>
    </ligand>
</feature>
<reference key="1">
    <citation type="journal article" date="2006" name="J. Bacteriol.">
        <title>The Methanosarcina barkeri genome: comparative analysis with Methanosarcina acetivorans and Methanosarcina mazei reveals extensive rearrangement within methanosarcinal genomes.</title>
        <authorList>
            <person name="Maeder D.L."/>
            <person name="Anderson I."/>
            <person name="Brettin T.S."/>
            <person name="Bruce D.C."/>
            <person name="Gilna P."/>
            <person name="Han C.S."/>
            <person name="Lapidus A."/>
            <person name="Metcalf W.W."/>
            <person name="Saunders E."/>
            <person name="Tapia R."/>
            <person name="Sowers K.R."/>
        </authorList>
    </citation>
    <scope>NUCLEOTIDE SEQUENCE [LARGE SCALE GENOMIC DNA]</scope>
    <source>
        <strain>Fusaro / DSM 804</strain>
    </source>
</reference>
<sequence>MRRLTMYPEQPDENRESIVMPLFEVVVYPKSRAKFLADKVTGEILLNDMKNAESVSAIGLTVKNGTKASDLSEESLYKIGNLLNITYVQPSDDGYLVVAKGIERVEAVSLYQKNGLFYATYRPVHDLPDFDEDAETEVMANIKKTIHEISARFQGSEQFTKSIDKMDSIDQIMGFVMPYIPVKLAEKQRLLELASVRERYLLFLHILTKHKENINLQIEMAKKVTDKISKSNREAMLREQLKVIQEELNEGDDSASGDAAYREKIENSTMPDEVKKKAFSELKKLETGGSHNPEAPGIRNYLDLLLDLPWITEEKKSIDIAEARRVLESNHNGLEKVKERIIQHLAVMKLKHEKQGSILLLIGPPGTGKTSLGKSIADALGRKYIRISLGGVKDEAEIRGHRRTYIGALPGRIIQGMRKAGTKNPVFILDEVDKLSASYSGDPASALLEVLDPEQNSTFSDHYLEIPYDLSDVLFIATANSMANIPWPLLDRMETIEISGYTKNEKLAIAKDHLVPCILEDHGLDAEKLKIEDEALKVIIDKYTREAGVRGLKKQLAKTARFVSEKIVSGKADLPYVVRADMLKEILGKEIIRQEEARKENVPGVVTGLAWTPVGGDILFIEGTFMPGSGKLTLTGQLGDVMKESAKISLSLVRSRLANTANSFDFTSSDIHIHVPSGATPKDGPSAGVTLFTALTSLIIGKAVDPKLAMTGEITLSGAVLPVGGIKEKVLAAHRAGIKKIILPKENERDLEDVPEDARNELQFVPVETIEEVLREALDIDLPRPVVPSSYPGSSYAPAHSV</sequence>
<dbReference type="EC" id="3.4.21.53" evidence="1"/>
<dbReference type="EMBL" id="CP000099">
    <property type="protein sequence ID" value="AAZ71487.1"/>
    <property type="molecule type" value="Genomic_DNA"/>
</dbReference>
<dbReference type="SMR" id="Q469F5"/>
<dbReference type="STRING" id="269797.Mbar_A2576"/>
<dbReference type="PaxDb" id="269797-Mbar_A2576"/>
<dbReference type="KEGG" id="mba:Mbar_A2576"/>
<dbReference type="eggNOG" id="arCOG02161">
    <property type="taxonomic scope" value="Archaea"/>
</dbReference>
<dbReference type="HOGENOM" id="CLU_004109_4_3_2"/>
<dbReference type="GO" id="GO:0005737">
    <property type="term" value="C:cytoplasm"/>
    <property type="evidence" value="ECO:0007669"/>
    <property type="project" value="UniProtKB-SubCell"/>
</dbReference>
<dbReference type="GO" id="GO:0005524">
    <property type="term" value="F:ATP binding"/>
    <property type="evidence" value="ECO:0007669"/>
    <property type="project" value="UniProtKB-UniRule"/>
</dbReference>
<dbReference type="GO" id="GO:0016887">
    <property type="term" value="F:ATP hydrolysis activity"/>
    <property type="evidence" value="ECO:0007669"/>
    <property type="project" value="UniProtKB-UniRule"/>
</dbReference>
<dbReference type="GO" id="GO:0004176">
    <property type="term" value="F:ATP-dependent peptidase activity"/>
    <property type="evidence" value="ECO:0007669"/>
    <property type="project" value="UniProtKB-UniRule"/>
</dbReference>
<dbReference type="GO" id="GO:0043565">
    <property type="term" value="F:sequence-specific DNA binding"/>
    <property type="evidence" value="ECO:0007669"/>
    <property type="project" value="UniProtKB-UniRule"/>
</dbReference>
<dbReference type="GO" id="GO:0004252">
    <property type="term" value="F:serine-type endopeptidase activity"/>
    <property type="evidence" value="ECO:0007669"/>
    <property type="project" value="UniProtKB-UniRule"/>
</dbReference>
<dbReference type="GO" id="GO:0034605">
    <property type="term" value="P:cellular response to heat"/>
    <property type="evidence" value="ECO:0007669"/>
    <property type="project" value="UniProtKB-UniRule"/>
</dbReference>
<dbReference type="GO" id="GO:0006515">
    <property type="term" value="P:protein quality control for misfolded or incompletely synthesized proteins"/>
    <property type="evidence" value="ECO:0007669"/>
    <property type="project" value="UniProtKB-UniRule"/>
</dbReference>
<dbReference type="CDD" id="cd19500">
    <property type="entry name" value="RecA-like_Lon"/>
    <property type="match status" value="1"/>
</dbReference>
<dbReference type="FunFam" id="3.40.50.300:FF:000021">
    <property type="entry name" value="Lon protease homolog"/>
    <property type="match status" value="1"/>
</dbReference>
<dbReference type="Gene3D" id="1.10.8.60">
    <property type="match status" value="1"/>
</dbReference>
<dbReference type="Gene3D" id="1.20.5.5270">
    <property type="match status" value="1"/>
</dbReference>
<dbReference type="Gene3D" id="1.20.58.1480">
    <property type="match status" value="1"/>
</dbReference>
<dbReference type="Gene3D" id="3.30.230.10">
    <property type="match status" value="1"/>
</dbReference>
<dbReference type="Gene3D" id="2.30.130.40">
    <property type="entry name" value="LON domain-like"/>
    <property type="match status" value="1"/>
</dbReference>
<dbReference type="Gene3D" id="3.40.50.300">
    <property type="entry name" value="P-loop containing nucleotide triphosphate hydrolases"/>
    <property type="match status" value="1"/>
</dbReference>
<dbReference type="HAMAP" id="MF_01973">
    <property type="entry name" value="lon_bact"/>
    <property type="match status" value="1"/>
</dbReference>
<dbReference type="InterPro" id="IPR003593">
    <property type="entry name" value="AAA+_ATPase"/>
</dbReference>
<dbReference type="InterPro" id="IPR003959">
    <property type="entry name" value="ATPase_AAA_core"/>
</dbReference>
<dbReference type="InterPro" id="IPR027543">
    <property type="entry name" value="Lon_bac"/>
</dbReference>
<dbReference type="InterPro" id="IPR004815">
    <property type="entry name" value="Lon_bac/euk-typ"/>
</dbReference>
<dbReference type="InterPro" id="IPR054594">
    <property type="entry name" value="Lon_lid"/>
</dbReference>
<dbReference type="InterPro" id="IPR008269">
    <property type="entry name" value="Lon_proteolytic"/>
</dbReference>
<dbReference type="InterPro" id="IPR027065">
    <property type="entry name" value="Lon_Prtase"/>
</dbReference>
<dbReference type="InterPro" id="IPR003111">
    <property type="entry name" value="Lon_prtase_N"/>
</dbReference>
<dbReference type="InterPro" id="IPR046336">
    <property type="entry name" value="Lon_prtase_N_sf"/>
</dbReference>
<dbReference type="InterPro" id="IPR027417">
    <property type="entry name" value="P-loop_NTPase"/>
</dbReference>
<dbReference type="InterPro" id="IPR008268">
    <property type="entry name" value="Peptidase_S16_AS"/>
</dbReference>
<dbReference type="InterPro" id="IPR015947">
    <property type="entry name" value="PUA-like_sf"/>
</dbReference>
<dbReference type="InterPro" id="IPR020568">
    <property type="entry name" value="Ribosomal_Su5_D2-typ_SF"/>
</dbReference>
<dbReference type="InterPro" id="IPR014721">
    <property type="entry name" value="Ribsml_uS5_D2-typ_fold_subgr"/>
</dbReference>
<dbReference type="NCBIfam" id="TIGR00763">
    <property type="entry name" value="lon"/>
    <property type="match status" value="1"/>
</dbReference>
<dbReference type="PANTHER" id="PTHR10046">
    <property type="entry name" value="ATP DEPENDENT LON PROTEASE FAMILY MEMBER"/>
    <property type="match status" value="1"/>
</dbReference>
<dbReference type="Pfam" id="PF00004">
    <property type="entry name" value="AAA"/>
    <property type="match status" value="1"/>
</dbReference>
<dbReference type="Pfam" id="PF05362">
    <property type="entry name" value="Lon_C"/>
    <property type="match status" value="1"/>
</dbReference>
<dbReference type="Pfam" id="PF22667">
    <property type="entry name" value="Lon_lid"/>
    <property type="match status" value="1"/>
</dbReference>
<dbReference type="Pfam" id="PF02190">
    <property type="entry name" value="LON_substr_bdg"/>
    <property type="match status" value="1"/>
</dbReference>
<dbReference type="PIRSF" id="PIRSF001174">
    <property type="entry name" value="Lon_proteas"/>
    <property type="match status" value="1"/>
</dbReference>
<dbReference type="PRINTS" id="PR00830">
    <property type="entry name" value="ENDOLAPTASE"/>
</dbReference>
<dbReference type="SMART" id="SM00382">
    <property type="entry name" value="AAA"/>
    <property type="match status" value="1"/>
</dbReference>
<dbReference type="SMART" id="SM00464">
    <property type="entry name" value="LON"/>
    <property type="match status" value="1"/>
</dbReference>
<dbReference type="SUPFAM" id="SSF52540">
    <property type="entry name" value="P-loop containing nucleoside triphosphate hydrolases"/>
    <property type="match status" value="1"/>
</dbReference>
<dbReference type="SUPFAM" id="SSF88697">
    <property type="entry name" value="PUA domain-like"/>
    <property type="match status" value="1"/>
</dbReference>
<dbReference type="SUPFAM" id="SSF54211">
    <property type="entry name" value="Ribosomal protein S5 domain 2-like"/>
    <property type="match status" value="1"/>
</dbReference>
<dbReference type="PROSITE" id="PS51787">
    <property type="entry name" value="LON_N"/>
    <property type="match status" value="1"/>
</dbReference>
<dbReference type="PROSITE" id="PS51786">
    <property type="entry name" value="LON_PROTEOLYTIC"/>
    <property type="match status" value="1"/>
</dbReference>
<dbReference type="PROSITE" id="PS01046">
    <property type="entry name" value="LON_SER"/>
    <property type="match status" value="1"/>
</dbReference>
<protein>
    <recommendedName>
        <fullName evidence="1">Lon protease</fullName>
        <ecNumber evidence="1">3.4.21.53</ecNumber>
    </recommendedName>
    <alternativeName>
        <fullName evidence="1">ATP-dependent protease La</fullName>
    </alternativeName>
</protein>
<gene>
    <name evidence="1" type="primary">lon</name>
    <name type="ordered locus">Mbar_A2576</name>
</gene>
<evidence type="ECO:0000255" key="1">
    <source>
        <dbReference type="HAMAP-Rule" id="MF_01973"/>
    </source>
</evidence>
<evidence type="ECO:0000255" key="2">
    <source>
        <dbReference type="PROSITE-ProRule" id="PRU01122"/>
    </source>
</evidence>
<evidence type="ECO:0000255" key="3">
    <source>
        <dbReference type="PROSITE-ProRule" id="PRU01123"/>
    </source>
</evidence>
<proteinExistence type="inferred from homology"/>
<name>LON_METBF</name>
<comment type="function">
    <text evidence="1">ATP-dependent serine protease that mediates the selective degradation of mutant and abnormal proteins as well as certain short-lived regulatory proteins. Required for cellular homeostasis and for survival from DNA damage and developmental changes induced by stress. Degrades polypeptides processively to yield small peptide fragments that are 5 to 10 amino acids long. Binds to DNA in a double-stranded, site-specific manner.</text>
</comment>
<comment type="catalytic activity">
    <reaction evidence="1">
        <text>Hydrolysis of proteins in presence of ATP.</text>
        <dbReference type="EC" id="3.4.21.53"/>
    </reaction>
</comment>
<comment type="subunit">
    <text evidence="1">Homohexamer. Organized in a ring with a central cavity.</text>
</comment>
<comment type="subcellular location">
    <subcellularLocation>
        <location evidence="1">Cytoplasm</location>
    </subcellularLocation>
</comment>
<comment type="induction">
    <text evidence="1">By heat shock.</text>
</comment>
<comment type="similarity">
    <text evidence="1">Belongs to the peptidase S16 family.</text>
</comment>
<organism>
    <name type="scientific">Methanosarcina barkeri (strain Fusaro / DSM 804)</name>
    <dbReference type="NCBI Taxonomy" id="269797"/>
    <lineage>
        <taxon>Archaea</taxon>
        <taxon>Methanobacteriati</taxon>
        <taxon>Methanobacteriota</taxon>
        <taxon>Stenosarchaea group</taxon>
        <taxon>Methanomicrobia</taxon>
        <taxon>Methanosarcinales</taxon>
        <taxon>Methanosarcinaceae</taxon>
        <taxon>Methanosarcina</taxon>
    </lineage>
</organism>
<keyword id="KW-0067">ATP-binding</keyword>
<keyword id="KW-0963">Cytoplasm</keyword>
<keyword id="KW-0378">Hydrolase</keyword>
<keyword id="KW-0547">Nucleotide-binding</keyword>
<keyword id="KW-0645">Protease</keyword>
<keyword id="KW-0720">Serine protease</keyword>
<keyword id="KW-0346">Stress response</keyword>
<accession>Q469F5</accession>